<proteinExistence type="inferred from homology"/>
<name>MSCL_SINMW</name>
<comment type="function">
    <text evidence="1">Channel that opens in response to stretch forces in the membrane lipid bilayer. May participate in the regulation of osmotic pressure changes within the cell.</text>
</comment>
<comment type="subunit">
    <text evidence="1">Homopentamer.</text>
</comment>
<comment type="subcellular location">
    <subcellularLocation>
        <location evidence="1">Cell inner membrane</location>
        <topology evidence="1">Multi-pass membrane protein</topology>
    </subcellularLocation>
</comment>
<comment type="similarity">
    <text evidence="1">Belongs to the MscL family.</text>
</comment>
<evidence type="ECO:0000255" key="1">
    <source>
        <dbReference type="HAMAP-Rule" id="MF_00115"/>
    </source>
</evidence>
<keyword id="KW-0997">Cell inner membrane</keyword>
<keyword id="KW-1003">Cell membrane</keyword>
<keyword id="KW-0407">Ion channel</keyword>
<keyword id="KW-0406">Ion transport</keyword>
<keyword id="KW-0472">Membrane</keyword>
<keyword id="KW-0812">Transmembrane</keyword>
<keyword id="KW-1133">Transmembrane helix</keyword>
<keyword id="KW-0813">Transport</keyword>
<sequence length="142" mass="15424">MLNEFKEFIARGNVMDLAVGVIIGAAFSKIVDSVVNDLVMPVVGALTGGGFDFSDYFLPLSGNVTAQTLAAAREQGAVFAYGNFITVFINFLILAWIIFLLIKLVNRARASVEREKAPEPAAPPPQDILLLSEIRDLLKQRA</sequence>
<feature type="chain" id="PRO_1000015430" description="Large-conductance mechanosensitive channel">
    <location>
        <begin position="1"/>
        <end position="142"/>
    </location>
</feature>
<feature type="transmembrane region" description="Helical" evidence="1">
    <location>
        <begin position="14"/>
        <end position="34"/>
    </location>
</feature>
<feature type="transmembrane region" description="Helical" evidence="1">
    <location>
        <begin position="82"/>
        <end position="102"/>
    </location>
</feature>
<organism>
    <name type="scientific">Sinorhizobium medicae (strain WSM419)</name>
    <name type="common">Ensifer medicae</name>
    <dbReference type="NCBI Taxonomy" id="366394"/>
    <lineage>
        <taxon>Bacteria</taxon>
        <taxon>Pseudomonadati</taxon>
        <taxon>Pseudomonadota</taxon>
        <taxon>Alphaproteobacteria</taxon>
        <taxon>Hyphomicrobiales</taxon>
        <taxon>Rhizobiaceae</taxon>
        <taxon>Sinorhizobium/Ensifer group</taxon>
        <taxon>Sinorhizobium</taxon>
    </lineage>
</organism>
<protein>
    <recommendedName>
        <fullName evidence="1">Large-conductance mechanosensitive channel</fullName>
    </recommendedName>
</protein>
<gene>
    <name evidence="1" type="primary">mscL</name>
    <name type="ordered locus">Smed_0166</name>
</gene>
<dbReference type="EMBL" id="CP000738">
    <property type="protein sequence ID" value="ABR59025.1"/>
    <property type="molecule type" value="Genomic_DNA"/>
</dbReference>
<dbReference type="RefSeq" id="WP_011974377.1">
    <property type="nucleotide sequence ID" value="NC_009636.1"/>
</dbReference>
<dbReference type="RefSeq" id="YP_001325860.1">
    <property type="nucleotide sequence ID" value="NC_009636.1"/>
</dbReference>
<dbReference type="SMR" id="A6U5U5"/>
<dbReference type="STRING" id="366394.Smed_0166"/>
<dbReference type="GeneID" id="61614469"/>
<dbReference type="KEGG" id="smd:Smed_0166"/>
<dbReference type="PATRIC" id="fig|366394.8.peg.3224"/>
<dbReference type="eggNOG" id="COG1970">
    <property type="taxonomic scope" value="Bacteria"/>
</dbReference>
<dbReference type="HOGENOM" id="CLU_095787_0_1_5"/>
<dbReference type="OrthoDB" id="9810350at2"/>
<dbReference type="Proteomes" id="UP000001108">
    <property type="component" value="Chromosome"/>
</dbReference>
<dbReference type="GO" id="GO:0005886">
    <property type="term" value="C:plasma membrane"/>
    <property type="evidence" value="ECO:0007669"/>
    <property type="project" value="UniProtKB-SubCell"/>
</dbReference>
<dbReference type="GO" id="GO:0008381">
    <property type="term" value="F:mechanosensitive monoatomic ion channel activity"/>
    <property type="evidence" value="ECO:0007669"/>
    <property type="project" value="UniProtKB-UniRule"/>
</dbReference>
<dbReference type="Gene3D" id="1.10.1200.120">
    <property type="entry name" value="Large-conductance mechanosensitive channel, MscL, domain 1"/>
    <property type="match status" value="1"/>
</dbReference>
<dbReference type="HAMAP" id="MF_00115">
    <property type="entry name" value="MscL"/>
    <property type="match status" value="1"/>
</dbReference>
<dbReference type="InterPro" id="IPR019823">
    <property type="entry name" value="Mechanosensitive_channel_CS"/>
</dbReference>
<dbReference type="InterPro" id="IPR001185">
    <property type="entry name" value="MS_channel"/>
</dbReference>
<dbReference type="InterPro" id="IPR037673">
    <property type="entry name" value="MSC/AndL"/>
</dbReference>
<dbReference type="InterPro" id="IPR036019">
    <property type="entry name" value="MscL_channel"/>
</dbReference>
<dbReference type="NCBIfam" id="TIGR00220">
    <property type="entry name" value="mscL"/>
    <property type="match status" value="1"/>
</dbReference>
<dbReference type="NCBIfam" id="NF001843">
    <property type="entry name" value="PRK00567.1-4"/>
    <property type="match status" value="1"/>
</dbReference>
<dbReference type="NCBIfam" id="NF010557">
    <property type="entry name" value="PRK13952.1"/>
    <property type="match status" value="1"/>
</dbReference>
<dbReference type="PANTHER" id="PTHR30266:SF2">
    <property type="entry name" value="LARGE-CONDUCTANCE MECHANOSENSITIVE CHANNEL"/>
    <property type="match status" value="1"/>
</dbReference>
<dbReference type="PANTHER" id="PTHR30266">
    <property type="entry name" value="MECHANOSENSITIVE CHANNEL MSCL"/>
    <property type="match status" value="1"/>
</dbReference>
<dbReference type="Pfam" id="PF01741">
    <property type="entry name" value="MscL"/>
    <property type="match status" value="1"/>
</dbReference>
<dbReference type="PRINTS" id="PR01264">
    <property type="entry name" value="MECHCHANNEL"/>
</dbReference>
<dbReference type="SUPFAM" id="SSF81330">
    <property type="entry name" value="Gated mechanosensitive channel"/>
    <property type="match status" value="1"/>
</dbReference>
<dbReference type="PROSITE" id="PS01327">
    <property type="entry name" value="MSCL"/>
    <property type="match status" value="1"/>
</dbReference>
<accession>A6U5U5</accession>
<reference key="1">
    <citation type="submission" date="2007-06" db="EMBL/GenBank/DDBJ databases">
        <title>Complete sequence of Sinorhizobium medicae WSM419 chromosome.</title>
        <authorList>
            <consortium name="US DOE Joint Genome Institute"/>
            <person name="Copeland A."/>
            <person name="Lucas S."/>
            <person name="Lapidus A."/>
            <person name="Barry K."/>
            <person name="Glavina del Rio T."/>
            <person name="Dalin E."/>
            <person name="Tice H."/>
            <person name="Pitluck S."/>
            <person name="Chain P."/>
            <person name="Malfatti S."/>
            <person name="Shin M."/>
            <person name="Vergez L."/>
            <person name="Schmutz J."/>
            <person name="Larimer F."/>
            <person name="Land M."/>
            <person name="Hauser L."/>
            <person name="Kyrpides N."/>
            <person name="Mikhailova N."/>
            <person name="Reeve W.G."/>
            <person name="Richardson P."/>
        </authorList>
    </citation>
    <scope>NUCLEOTIDE SEQUENCE [LARGE SCALE GENOMIC DNA]</scope>
    <source>
        <strain>WSM419</strain>
    </source>
</reference>